<proteinExistence type="inferred from homology"/>
<evidence type="ECO:0000255" key="1">
    <source>
        <dbReference type="HAMAP-Rule" id="MF_01365"/>
    </source>
</evidence>
<evidence type="ECO:0000305" key="2"/>
<keyword id="KW-1185">Reference proteome</keyword>
<keyword id="KW-0687">Ribonucleoprotein</keyword>
<keyword id="KW-0689">Ribosomal protein</keyword>
<keyword id="KW-0694">RNA-binding</keyword>
<keyword id="KW-0699">rRNA-binding</keyword>
<comment type="function">
    <text evidence="1">This protein binds to the 23S rRNA, and is important in its secondary structure. It is located near the subunit interface in the base of the L7/L12 stalk, and near the tRNA binding site of the peptidyltransferase center.</text>
</comment>
<comment type="subunit">
    <text evidence="1">Part of the 50S ribosomal subunit.</text>
</comment>
<comment type="similarity">
    <text evidence="1">Belongs to the universal ribosomal protein uL6 family.</text>
</comment>
<organism>
    <name type="scientific">Francisella tularensis subsp. holarctica (strain LVS)</name>
    <dbReference type="NCBI Taxonomy" id="376619"/>
    <lineage>
        <taxon>Bacteria</taxon>
        <taxon>Pseudomonadati</taxon>
        <taxon>Pseudomonadota</taxon>
        <taxon>Gammaproteobacteria</taxon>
        <taxon>Thiotrichales</taxon>
        <taxon>Francisellaceae</taxon>
        <taxon>Francisella</taxon>
    </lineage>
</organism>
<accession>Q2A5F5</accession>
<reference key="1">
    <citation type="submission" date="2006-03" db="EMBL/GenBank/DDBJ databases">
        <title>Complete genome sequence of Francisella tularensis LVS (Live Vaccine Strain).</title>
        <authorList>
            <person name="Chain P."/>
            <person name="Larimer F."/>
            <person name="Land M."/>
            <person name="Stilwagen S."/>
            <person name="Larsson P."/>
            <person name="Bearden S."/>
            <person name="Chu M."/>
            <person name="Oyston P."/>
            <person name="Forsman M."/>
            <person name="Andersson S."/>
            <person name="Lindler L."/>
            <person name="Titball R."/>
            <person name="Garcia E."/>
        </authorList>
    </citation>
    <scope>NUCLEOTIDE SEQUENCE [LARGE SCALE GENOMIC DNA]</scope>
    <source>
        <strain>LVS</strain>
    </source>
</reference>
<protein>
    <recommendedName>
        <fullName evidence="1">Large ribosomal subunit protein uL6</fullName>
    </recommendedName>
    <alternativeName>
        <fullName evidence="2">50S ribosomal protein L6</fullName>
    </alternativeName>
</protein>
<feature type="chain" id="PRO_0000260866" description="Large ribosomal subunit protein uL6">
    <location>
        <begin position="1"/>
        <end position="178"/>
    </location>
</feature>
<name>RL6_FRATH</name>
<dbReference type="EMBL" id="AM233362">
    <property type="protein sequence ID" value="CAJ78692.1"/>
    <property type="molecule type" value="Genomic_DNA"/>
</dbReference>
<dbReference type="RefSeq" id="WP_003014357.1">
    <property type="nucleotide sequence ID" value="NZ_CP009694.1"/>
</dbReference>
<dbReference type="SMR" id="Q2A5F5"/>
<dbReference type="KEGG" id="ftl:FTL_0251"/>
<dbReference type="Proteomes" id="UP000001944">
    <property type="component" value="Chromosome"/>
</dbReference>
<dbReference type="GO" id="GO:0022625">
    <property type="term" value="C:cytosolic large ribosomal subunit"/>
    <property type="evidence" value="ECO:0007669"/>
    <property type="project" value="TreeGrafter"/>
</dbReference>
<dbReference type="GO" id="GO:0019843">
    <property type="term" value="F:rRNA binding"/>
    <property type="evidence" value="ECO:0007669"/>
    <property type="project" value="UniProtKB-UniRule"/>
</dbReference>
<dbReference type="GO" id="GO:0003735">
    <property type="term" value="F:structural constituent of ribosome"/>
    <property type="evidence" value="ECO:0007669"/>
    <property type="project" value="InterPro"/>
</dbReference>
<dbReference type="GO" id="GO:0002181">
    <property type="term" value="P:cytoplasmic translation"/>
    <property type="evidence" value="ECO:0007669"/>
    <property type="project" value="TreeGrafter"/>
</dbReference>
<dbReference type="FunFam" id="3.90.930.12:FF:000001">
    <property type="entry name" value="50S ribosomal protein L6"/>
    <property type="match status" value="1"/>
</dbReference>
<dbReference type="Gene3D" id="3.90.930.12">
    <property type="entry name" value="Ribosomal protein L6, alpha-beta domain"/>
    <property type="match status" value="2"/>
</dbReference>
<dbReference type="HAMAP" id="MF_01365_B">
    <property type="entry name" value="Ribosomal_uL6_B"/>
    <property type="match status" value="1"/>
</dbReference>
<dbReference type="InterPro" id="IPR000702">
    <property type="entry name" value="Ribosomal_uL6-like"/>
</dbReference>
<dbReference type="InterPro" id="IPR036789">
    <property type="entry name" value="Ribosomal_uL6-like_a/b-dom_sf"/>
</dbReference>
<dbReference type="InterPro" id="IPR020040">
    <property type="entry name" value="Ribosomal_uL6_a/b-dom"/>
</dbReference>
<dbReference type="InterPro" id="IPR019906">
    <property type="entry name" value="Ribosomal_uL6_bac-type"/>
</dbReference>
<dbReference type="InterPro" id="IPR002358">
    <property type="entry name" value="Ribosomal_uL6_CS"/>
</dbReference>
<dbReference type="NCBIfam" id="TIGR03654">
    <property type="entry name" value="L6_bact"/>
    <property type="match status" value="1"/>
</dbReference>
<dbReference type="PANTHER" id="PTHR11655">
    <property type="entry name" value="60S/50S RIBOSOMAL PROTEIN L6/L9"/>
    <property type="match status" value="1"/>
</dbReference>
<dbReference type="PANTHER" id="PTHR11655:SF14">
    <property type="entry name" value="LARGE RIBOSOMAL SUBUNIT PROTEIN UL6M"/>
    <property type="match status" value="1"/>
</dbReference>
<dbReference type="Pfam" id="PF00347">
    <property type="entry name" value="Ribosomal_L6"/>
    <property type="match status" value="2"/>
</dbReference>
<dbReference type="PIRSF" id="PIRSF002162">
    <property type="entry name" value="Ribosomal_L6"/>
    <property type="match status" value="1"/>
</dbReference>
<dbReference type="PRINTS" id="PR00059">
    <property type="entry name" value="RIBOSOMALL6"/>
</dbReference>
<dbReference type="SUPFAM" id="SSF56053">
    <property type="entry name" value="Ribosomal protein L6"/>
    <property type="match status" value="2"/>
</dbReference>
<dbReference type="PROSITE" id="PS00525">
    <property type="entry name" value="RIBOSOMAL_L6_1"/>
    <property type="match status" value="1"/>
</dbReference>
<gene>
    <name evidence="1" type="primary">rplF</name>
    <name type="ordered locus">FTL_0251</name>
</gene>
<sequence length="178" mass="19075">MSRIGKKPVVIPSGVTINVAAGNKVEVKGAKATLSKTFSTDVTFSVADNVATITPNNNSKNAVAQSGTARAILSNMVEGVSKGFERKLKIIGVGYRAKAQGNELNLTLGFSHPVVYKLPQGITAETPAPTEIILKGADKELLGKVASEVREYRKPEPYKGKGVRYEDEYVAKKEAKKK</sequence>